<keyword id="KW-0325">Glycoprotein</keyword>
<keyword id="KW-0433">Leucine-rich repeat</keyword>
<keyword id="KW-0472">Membrane</keyword>
<keyword id="KW-1185">Reference proteome</keyword>
<keyword id="KW-0677">Repeat</keyword>
<keyword id="KW-0732">Signal</keyword>
<keyword id="KW-0812">Transmembrane</keyword>
<keyword id="KW-1133">Transmembrane helix</keyword>
<dbReference type="EMBL" id="AB097572">
    <property type="protein sequence ID" value="BAC67206.1"/>
    <property type="molecule type" value="Genomic_DNA"/>
</dbReference>
<dbReference type="EMBL" id="AK158856">
    <property type="protein sequence ID" value="BAE34696.1"/>
    <property type="molecule type" value="mRNA"/>
</dbReference>
<dbReference type="EMBL" id="CH466547">
    <property type="protein sequence ID" value="EDL15486.1"/>
    <property type="molecule type" value="Genomic_DNA"/>
</dbReference>
<dbReference type="EMBL" id="BC066059">
    <property type="protein sequence ID" value="AAH66059.1"/>
    <property type="molecule type" value="mRNA"/>
</dbReference>
<dbReference type="CCDS" id="CCDS17410.1"/>
<dbReference type="RefSeq" id="NP_001344780.1">
    <property type="nucleotide sequence ID" value="NM_001357851.1"/>
</dbReference>
<dbReference type="RefSeq" id="NP_942564.2">
    <property type="nucleotide sequence ID" value="NM_198864.2"/>
</dbReference>
<dbReference type="RefSeq" id="XP_006501701.1">
    <property type="nucleotide sequence ID" value="XM_006501638.3"/>
</dbReference>
<dbReference type="RefSeq" id="XP_006501702.1">
    <property type="nucleotide sequence ID" value="XM_006501639.3"/>
</dbReference>
<dbReference type="RefSeq" id="XP_006501703.1">
    <property type="nucleotide sequence ID" value="XM_006501640.3"/>
</dbReference>
<dbReference type="RefSeq" id="XP_006501704.1">
    <property type="nucleotide sequence ID" value="XM_006501641.3"/>
</dbReference>
<dbReference type="RefSeq" id="XP_006501705.1">
    <property type="nucleotide sequence ID" value="XM_006501642.2"/>
</dbReference>
<dbReference type="SMR" id="Q810B9"/>
<dbReference type="FunCoup" id="Q810B9">
    <property type="interactions" value="217"/>
</dbReference>
<dbReference type="STRING" id="10090.ENSMUSP00000141236"/>
<dbReference type="GlyCosmos" id="Q810B9">
    <property type="glycosylation" value="2 sites, No reported glycans"/>
</dbReference>
<dbReference type="GlyGen" id="Q810B9">
    <property type="glycosylation" value="6 sites, 3 N-linked glycans (3 sites), 1 O-linked glycan (1 site)"/>
</dbReference>
<dbReference type="iPTMnet" id="Q810B9"/>
<dbReference type="PhosphoSitePlus" id="Q810B9"/>
<dbReference type="PaxDb" id="10090-ENSMUSP00000088561"/>
<dbReference type="ProteomicsDB" id="258691"/>
<dbReference type="Antibodypedia" id="2998">
    <property type="antibodies" value="111 antibodies from 25 providers"/>
</dbReference>
<dbReference type="DNASU" id="386750"/>
<dbReference type="Ensembl" id="ENSMUST00000059407.9">
    <property type="protein sequence ID" value="ENSMUSP00000088561.5"/>
    <property type="gene ID" value="ENSMUSG00000048304.9"/>
</dbReference>
<dbReference type="Ensembl" id="ENSMUST00000192477.2">
    <property type="protein sequence ID" value="ENSMUSP00000141236.2"/>
    <property type="gene ID" value="ENSMUSG00000048304.9"/>
</dbReference>
<dbReference type="GeneID" id="386750"/>
<dbReference type="KEGG" id="mmu:386750"/>
<dbReference type="UCSC" id="uc008pms.1">
    <property type="organism name" value="mouse"/>
</dbReference>
<dbReference type="AGR" id="MGI:2679447"/>
<dbReference type="CTD" id="22865"/>
<dbReference type="MGI" id="MGI:2679447">
    <property type="gene designation" value="Slitrk3"/>
</dbReference>
<dbReference type="VEuPathDB" id="HostDB:ENSMUSG00000048304"/>
<dbReference type="eggNOG" id="ENOG502QYY5">
    <property type="taxonomic scope" value="Eukaryota"/>
</dbReference>
<dbReference type="GeneTree" id="ENSGT00940000158681"/>
<dbReference type="HOGENOM" id="CLU_012706_0_0_1"/>
<dbReference type="InParanoid" id="Q810B9"/>
<dbReference type="OMA" id="TLHKGRM"/>
<dbReference type="OrthoDB" id="676979at2759"/>
<dbReference type="PhylomeDB" id="Q810B9"/>
<dbReference type="TreeFam" id="TF351826"/>
<dbReference type="Reactome" id="R-MMU-388844">
    <property type="pathway name" value="Receptor-type tyrosine-protein phosphatases"/>
</dbReference>
<dbReference type="Reactome" id="R-MMU-9013423">
    <property type="pathway name" value="RAC3 GTPase cycle"/>
</dbReference>
<dbReference type="BioGRID-ORCS" id="386750">
    <property type="hits" value="2 hits in 77 CRISPR screens"/>
</dbReference>
<dbReference type="ChiTaRS" id="Slitrk3">
    <property type="organism name" value="mouse"/>
</dbReference>
<dbReference type="PRO" id="PR:Q810B9"/>
<dbReference type="Proteomes" id="UP000000589">
    <property type="component" value="Chromosome 3"/>
</dbReference>
<dbReference type="RNAct" id="Q810B9">
    <property type="molecule type" value="protein"/>
</dbReference>
<dbReference type="Bgee" id="ENSMUSG00000048304">
    <property type="expression patterns" value="Expressed in rostral migratory stream and 61 other cell types or tissues"/>
</dbReference>
<dbReference type="GO" id="GO:0009986">
    <property type="term" value="C:cell surface"/>
    <property type="evidence" value="ECO:0000314"/>
    <property type="project" value="MGI"/>
</dbReference>
<dbReference type="GO" id="GO:0098982">
    <property type="term" value="C:GABA-ergic synapse"/>
    <property type="evidence" value="ECO:0000314"/>
    <property type="project" value="MGI"/>
</dbReference>
<dbReference type="GO" id="GO:0016020">
    <property type="term" value="C:membrane"/>
    <property type="evidence" value="ECO:0000250"/>
    <property type="project" value="MGI"/>
</dbReference>
<dbReference type="GO" id="GO:0098839">
    <property type="term" value="C:postsynaptic density membrane"/>
    <property type="evidence" value="ECO:0007669"/>
    <property type="project" value="Ensembl"/>
</dbReference>
<dbReference type="GO" id="GO:0045211">
    <property type="term" value="C:postsynaptic membrane"/>
    <property type="evidence" value="ECO:0000314"/>
    <property type="project" value="SynGO"/>
</dbReference>
<dbReference type="GO" id="GO:0007409">
    <property type="term" value="P:axonogenesis"/>
    <property type="evidence" value="ECO:0000314"/>
    <property type="project" value="MGI"/>
</dbReference>
<dbReference type="GO" id="GO:0097116">
    <property type="term" value="P:gephyrin clustering involved in postsynaptic density assembly"/>
    <property type="evidence" value="ECO:0000315"/>
    <property type="project" value="MGI"/>
</dbReference>
<dbReference type="GO" id="GO:0072578">
    <property type="term" value="P:neurotransmitter-gated ion channel clustering"/>
    <property type="evidence" value="ECO:0000314"/>
    <property type="project" value="MGI"/>
</dbReference>
<dbReference type="GO" id="GO:0051965">
    <property type="term" value="P:positive regulation of synapse assembly"/>
    <property type="evidence" value="ECO:0000314"/>
    <property type="project" value="MGI"/>
</dbReference>
<dbReference type="GO" id="GO:0097107">
    <property type="term" value="P:postsynaptic density assembly"/>
    <property type="evidence" value="ECO:0000315"/>
    <property type="project" value="MGI"/>
</dbReference>
<dbReference type="GO" id="GO:1905606">
    <property type="term" value="P:regulation of presynapse assembly"/>
    <property type="evidence" value="ECO:0000314"/>
    <property type="project" value="SynGO"/>
</dbReference>
<dbReference type="GO" id="GO:0099560">
    <property type="term" value="P:synaptic membrane adhesion"/>
    <property type="evidence" value="ECO:0007669"/>
    <property type="project" value="Ensembl"/>
</dbReference>
<dbReference type="GO" id="GO:0051932">
    <property type="term" value="P:synaptic transmission, GABAergic"/>
    <property type="evidence" value="ECO:0000314"/>
    <property type="project" value="MGI"/>
</dbReference>
<dbReference type="GO" id="GO:0072553">
    <property type="term" value="P:terminal button organization"/>
    <property type="evidence" value="ECO:0000315"/>
    <property type="project" value="MGI"/>
</dbReference>
<dbReference type="FunFam" id="3.80.10.10:FF:000001">
    <property type="entry name" value="SLIT and NTRK-like family, member 1"/>
    <property type="match status" value="2"/>
</dbReference>
<dbReference type="Gene3D" id="3.80.10.10">
    <property type="entry name" value="Ribonuclease Inhibitor"/>
    <property type="match status" value="2"/>
</dbReference>
<dbReference type="InterPro" id="IPR000483">
    <property type="entry name" value="Cys-rich_flank_reg_C"/>
</dbReference>
<dbReference type="InterPro" id="IPR001611">
    <property type="entry name" value="Leu-rich_rpt"/>
</dbReference>
<dbReference type="InterPro" id="IPR003591">
    <property type="entry name" value="Leu-rich_rpt_typical-subtyp"/>
</dbReference>
<dbReference type="InterPro" id="IPR032675">
    <property type="entry name" value="LRR_dom_sf"/>
</dbReference>
<dbReference type="PANTHER" id="PTHR45773:SF6">
    <property type="entry name" value="SLIT AND NTRK-LIKE PROTEIN 3"/>
    <property type="match status" value="1"/>
</dbReference>
<dbReference type="PANTHER" id="PTHR45773">
    <property type="entry name" value="SLIT AND NTRK-LIKE PROTEIN 4-RELATED"/>
    <property type="match status" value="1"/>
</dbReference>
<dbReference type="Pfam" id="PF13855">
    <property type="entry name" value="LRR_8"/>
    <property type="match status" value="2"/>
</dbReference>
<dbReference type="SMART" id="SM00369">
    <property type="entry name" value="LRR_TYP"/>
    <property type="match status" value="9"/>
</dbReference>
<dbReference type="SMART" id="SM00082">
    <property type="entry name" value="LRRCT"/>
    <property type="match status" value="2"/>
</dbReference>
<dbReference type="SUPFAM" id="SSF52058">
    <property type="entry name" value="L domain-like"/>
    <property type="match status" value="2"/>
</dbReference>
<comment type="function">
    <text evidence="3">Suppresses neurite outgrowth.</text>
</comment>
<comment type="subcellular location">
    <subcellularLocation>
        <location evidence="4">Membrane</location>
        <topology evidence="4">Single-pass type I membrane protein</topology>
    </subcellularLocation>
</comment>
<comment type="tissue specificity">
    <text evidence="3">Broadly expressed in embryonic brain with highest expression in cortical plate, pyramidal cell layer of the hippocampus, thalamus and hypothalamus.</text>
</comment>
<comment type="similarity">
    <text evidence="4">Belongs to the SLITRK family.</text>
</comment>
<sequence>MMKPSIAEMLHRGRMLWIILLSTIALGWTTPIPLIEDSEEIDEPCFDPCYCEVKESLFHIHCDSKGFTNISQITEFWSRPFKLYLQRNSMRRLYTNSFLHLNNAVSINLGNNALQDIQTGAFNGLKILKRLYLHENKLDVFRNDTFLGLESLEYLQADYNVIKRIESGAFRNLSKLRVLILNDNLIPVLPTNLFKAVSLTHLDLRGNRLKVLFYRGMLDHIGRSLMELQLEENPWNCTCEIVQLKSWLERIPYTALVGDITCETPFHFHGKDLREIKKTELCPLLSDSEVEASLGIPHLSSSKENAWPTKPSSMLSSVHFTASSVEYKSSNKQPKPTKQPRTPRPPSTSQALYPGPNQPPIAPYQTRPPIPIICPTGCTCNLHINDLGLTVNCKERGFNNISELLPRPLNAKKLYLSSNLIQKIYRSDFWNFSSLDLLHLGNNRISYVQDGAFINLPNLKSLFLNGNDIEKLTPGMFRGLQSLHYLYFEFNVIREIQPAAFSLMPNLKLLFLNNNLLRTLPTDAFAGTSLARLNLRKNYFLYLPVAGVLEHLNAIVQIDLNENPWDCTCDLVPFKQWIETISSVSVVGDVLCRTPENLTHRDVRTIELEVLCPEMLHIAQPGPSPPQPGDYHPNGGPTSASPYEFSPPGGPVPLSVLILSLLVLFFSAVFVAAGLFAYVLRRRRKKLPFRSKRQEGVDLTGIQMQCHRLFEDSGGNSGGSGGGGRPTLSSPEKAPPVGHVYEYIPHPVTQMCNNPIYKPREEEEVAASAAQDTGATDRGGPGTQPTGMAEVLLGSEQFAETPKENHSNYRTLLEKEKEWALAVSNSQLNTIVTVNHHHPHPHHSAVGGVSGVGGGTGGDLAGFRHHEKNGGVVLFPPGGGCGGGSLLLDRERPQPAPCTVGFVDCLYGTVPKLKELHVHPPGMQYPDLQQDARLKETLLFSAGKGFTDHQTPKSDYLDLRAKLQTKPDYLEVLEKTAYRF</sequence>
<organism evidence="5">
    <name type="scientific">Mus musculus</name>
    <name type="common">Mouse</name>
    <dbReference type="NCBI Taxonomy" id="10090"/>
    <lineage>
        <taxon>Eukaryota</taxon>
        <taxon>Metazoa</taxon>
        <taxon>Chordata</taxon>
        <taxon>Craniata</taxon>
        <taxon>Vertebrata</taxon>
        <taxon>Euteleostomi</taxon>
        <taxon>Mammalia</taxon>
        <taxon>Eutheria</taxon>
        <taxon>Euarchontoglires</taxon>
        <taxon>Glires</taxon>
        <taxon>Rodentia</taxon>
        <taxon>Myomorpha</taxon>
        <taxon>Muroidea</taxon>
        <taxon>Muridae</taxon>
        <taxon>Murinae</taxon>
        <taxon>Mus</taxon>
        <taxon>Mus</taxon>
    </lineage>
</organism>
<feature type="signal peptide" evidence="1">
    <location>
        <begin position="1"/>
        <end position="27"/>
    </location>
</feature>
<feature type="chain" id="PRO_0000032678" description="SLIT and NTRK-like protein 3" evidence="1">
    <location>
        <begin position="28"/>
        <end position="980"/>
    </location>
</feature>
<feature type="topological domain" description="Extracellular" evidence="1">
    <location>
        <begin position="30"/>
        <end position="655"/>
    </location>
</feature>
<feature type="transmembrane region" description="Helical" evidence="1">
    <location>
        <begin position="656"/>
        <end position="676"/>
    </location>
</feature>
<feature type="topological domain" description="Cytoplasmic" evidence="1">
    <location>
        <begin position="677"/>
        <end position="980"/>
    </location>
</feature>
<feature type="repeat" description="LRR 1">
    <location>
        <begin position="79"/>
        <end position="100"/>
    </location>
</feature>
<feature type="repeat" description="LRR 2">
    <location>
        <begin position="103"/>
        <end position="124"/>
    </location>
</feature>
<feature type="repeat" description="LRR 3">
    <location>
        <begin position="127"/>
        <end position="148"/>
    </location>
</feature>
<feature type="repeat" description="LRR 4">
    <location>
        <begin position="151"/>
        <end position="172"/>
    </location>
</feature>
<feature type="repeat" description="LRR 5">
    <location>
        <begin position="175"/>
        <end position="196"/>
    </location>
</feature>
<feature type="repeat" description="LRR 6">
    <location>
        <begin position="198"/>
        <end position="219"/>
    </location>
</feature>
<feature type="domain" description="LRRCT 1">
    <location>
        <begin position="233"/>
        <end position="284"/>
    </location>
</feature>
<feature type="domain" description="LRRNT">
    <location>
        <begin position="365"/>
        <end position="407"/>
    </location>
</feature>
<feature type="repeat" description="LRR 7">
    <location>
        <begin position="410"/>
        <end position="431"/>
    </location>
</feature>
<feature type="repeat" description="LRR 8">
    <location>
        <begin position="434"/>
        <end position="455"/>
    </location>
</feature>
<feature type="repeat" description="LRR 9">
    <location>
        <begin position="458"/>
        <end position="479"/>
    </location>
</feature>
<feature type="repeat" description="LRR 10">
    <location>
        <begin position="482"/>
        <end position="503"/>
    </location>
</feature>
<feature type="repeat" description="LRR 11">
    <location>
        <begin position="506"/>
        <end position="527"/>
    </location>
</feature>
<feature type="repeat" description="LRR 12">
    <location>
        <begin position="529"/>
        <end position="550"/>
    </location>
</feature>
<feature type="domain" description="LRRCT 2">
    <location>
        <begin position="563"/>
        <end position="614"/>
    </location>
</feature>
<feature type="region of interest" description="Disordered" evidence="2">
    <location>
        <begin position="326"/>
        <end position="361"/>
    </location>
</feature>
<feature type="region of interest" description="Disordered" evidence="2">
    <location>
        <begin position="622"/>
        <end position="644"/>
    </location>
</feature>
<feature type="region of interest" description="Disordered" evidence="2">
    <location>
        <begin position="709"/>
        <end position="735"/>
    </location>
</feature>
<feature type="region of interest" description="Disordered" evidence="2">
    <location>
        <begin position="762"/>
        <end position="785"/>
    </location>
</feature>
<feature type="compositionally biased region" description="Gly residues" evidence="2">
    <location>
        <begin position="715"/>
        <end position="725"/>
    </location>
</feature>
<feature type="glycosylation site" description="N-linked (GlcNAc...) asparagine" evidence="1">
    <location>
        <position position="69"/>
    </location>
</feature>
<feature type="glycosylation site" description="N-linked (GlcNAc...) asparagine" evidence="1">
    <location>
        <position position="597"/>
    </location>
</feature>
<feature type="sequence conflict" description="In Ref. 1; BAC67206." evidence="4" ref="1">
    <original>G</original>
    <variation>R</variation>
    <location>
        <position position="636"/>
    </location>
</feature>
<feature type="sequence conflict" description="In Ref. 1; BAC67206." evidence="4" ref="1">
    <original>R</original>
    <variation>K</variation>
    <location>
        <position position="690"/>
    </location>
</feature>
<feature type="sequence conflict" description="In Ref. 1; BAC67206." evidence="4" ref="1">
    <original>GGG</original>
    <variation>EGE</variation>
    <location>
        <begin position="721"/>
        <end position="723"/>
    </location>
</feature>
<feature type="sequence conflict" description="In Ref. 1; BAC67206." evidence="4" ref="1">
    <original>E</original>
    <variation>K</variation>
    <location>
        <position position="732"/>
    </location>
</feature>
<feature type="sequence conflict" description="In Ref. 1; BAC67206." evidence="4" ref="1">
    <original>P</original>
    <variation>L</variation>
    <location>
        <position position="735"/>
    </location>
</feature>
<feature type="sequence conflict" description="In Ref. 1; BAC67206." evidence="4" ref="1">
    <original>A</original>
    <variation>T</variation>
    <location>
        <position position="977"/>
    </location>
</feature>
<accession>Q810B9</accession>
<accession>Q6NZM5</accession>
<gene>
    <name type="primary">Slitrk3</name>
</gene>
<reference evidence="4" key="1">
    <citation type="journal article" date="2003" name="Mol. Cell. Neurosci.">
        <title>Identification and characterization of Slitrk, a novel neuronal transmembrane protein family controlling neurite outgrowth.</title>
        <authorList>
            <person name="Aruga J."/>
            <person name="Mikoshiba K."/>
        </authorList>
    </citation>
    <scope>NUCLEOTIDE SEQUENCE [GENOMIC DNA]</scope>
    <scope>FUNCTION</scope>
    <scope>TISSUE SPECIFICITY</scope>
</reference>
<reference key="2">
    <citation type="journal article" date="2005" name="Science">
        <title>The transcriptional landscape of the mammalian genome.</title>
        <authorList>
            <person name="Carninci P."/>
            <person name="Kasukawa T."/>
            <person name="Katayama S."/>
            <person name="Gough J."/>
            <person name="Frith M.C."/>
            <person name="Maeda N."/>
            <person name="Oyama R."/>
            <person name="Ravasi T."/>
            <person name="Lenhard B."/>
            <person name="Wells C."/>
            <person name="Kodzius R."/>
            <person name="Shimokawa K."/>
            <person name="Bajic V.B."/>
            <person name="Brenner S.E."/>
            <person name="Batalov S."/>
            <person name="Forrest A.R."/>
            <person name="Zavolan M."/>
            <person name="Davis M.J."/>
            <person name="Wilming L.G."/>
            <person name="Aidinis V."/>
            <person name="Allen J.E."/>
            <person name="Ambesi-Impiombato A."/>
            <person name="Apweiler R."/>
            <person name="Aturaliya R.N."/>
            <person name="Bailey T.L."/>
            <person name="Bansal M."/>
            <person name="Baxter L."/>
            <person name="Beisel K.W."/>
            <person name="Bersano T."/>
            <person name="Bono H."/>
            <person name="Chalk A.M."/>
            <person name="Chiu K.P."/>
            <person name="Choudhary V."/>
            <person name="Christoffels A."/>
            <person name="Clutterbuck D.R."/>
            <person name="Crowe M.L."/>
            <person name="Dalla E."/>
            <person name="Dalrymple B.P."/>
            <person name="de Bono B."/>
            <person name="Della Gatta G."/>
            <person name="di Bernardo D."/>
            <person name="Down T."/>
            <person name="Engstrom P."/>
            <person name="Fagiolini M."/>
            <person name="Faulkner G."/>
            <person name="Fletcher C.F."/>
            <person name="Fukushima T."/>
            <person name="Furuno M."/>
            <person name="Futaki S."/>
            <person name="Gariboldi M."/>
            <person name="Georgii-Hemming P."/>
            <person name="Gingeras T.R."/>
            <person name="Gojobori T."/>
            <person name="Green R.E."/>
            <person name="Gustincich S."/>
            <person name="Harbers M."/>
            <person name="Hayashi Y."/>
            <person name="Hensch T.K."/>
            <person name="Hirokawa N."/>
            <person name="Hill D."/>
            <person name="Huminiecki L."/>
            <person name="Iacono M."/>
            <person name="Ikeo K."/>
            <person name="Iwama A."/>
            <person name="Ishikawa T."/>
            <person name="Jakt M."/>
            <person name="Kanapin A."/>
            <person name="Katoh M."/>
            <person name="Kawasawa Y."/>
            <person name="Kelso J."/>
            <person name="Kitamura H."/>
            <person name="Kitano H."/>
            <person name="Kollias G."/>
            <person name="Krishnan S.P."/>
            <person name="Kruger A."/>
            <person name="Kummerfeld S.K."/>
            <person name="Kurochkin I.V."/>
            <person name="Lareau L.F."/>
            <person name="Lazarevic D."/>
            <person name="Lipovich L."/>
            <person name="Liu J."/>
            <person name="Liuni S."/>
            <person name="McWilliam S."/>
            <person name="Madan Babu M."/>
            <person name="Madera M."/>
            <person name="Marchionni L."/>
            <person name="Matsuda H."/>
            <person name="Matsuzawa S."/>
            <person name="Miki H."/>
            <person name="Mignone F."/>
            <person name="Miyake S."/>
            <person name="Morris K."/>
            <person name="Mottagui-Tabar S."/>
            <person name="Mulder N."/>
            <person name="Nakano N."/>
            <person name="Nakauchi H."/>
            <person name="Ng P."/>
            <person name="Nilsson R."/>
            <person name="Nishiguchi S."/>
            <person name="Nishikawa S."/>
            <person name="Nori F."/>
            <person name="Ohara O."/>
            <person name="Okazaki Y."/>
            <person name="Orlando V."/>
            <person name="Pang K.C."/>
            <person name="Pavan W.J."/>
            <person name="Pavesi G."/>
            <person name="Pesole G."/>
            <person name="Petrovsky N."/>
            <person name="Piazza S."/>
            <person name="Reed J."/>
            <person name="Reid J.F."/>
            <person name="Ring B.Z."/>
            <person name="Ringwald M."/>
            <person name="Rost B."/>
            <person name="Ruan Y."/>
            <person name="Salzberg S.L."/>
            <person name="Sandelin A."/>
            <person name="Schneider C."/>
            <person name="Schoenbach C."/>
            <person name="Sekiguchi K."/>
            <person name="Semple C.A."/>
            <person name="Seno S."/>
            <person name="Sessa L."/>
            <person name="Sheng Y."/>
            <person name="Shibata Y."/>
            <person name="Shimada H."/>
            <person name="Shimada K."/>
            <person name="Silva D."/>
            <person name="Sinclair B."/>
            <person name="Sperling S."/>
            <person name="Stupka E."/>
            <person name="Sugiura K."/>
            <person name="Sultana R."/>
            <person name="Takenaka Y."/>
            <person name="Taki K."/>
            <person name="Tammoja K."/>
            <person name="Tan S.L."/>
            <person name="Tang S."/>
            <person name="Taylor M.S."/>
            <person name="Tegner J."/>
            <person name="Teichmann S.A."/>
            <person name="Ueda H.R."/>
            <person name="van Nimwegen E."/>
            <person name="Verardo R."/>
            <person name="Wei C.L."/>
            <person name="Yagi K."/>
            <person name="Yamanishi H."/>
            <person name="Zabarovsky E."/>
            <person name="Zhu S."/>
            <person name="Zimmer A."/>
            <person name="Hide W."/>
            <person name="Bult C."/>
            <person name="Grimmond S.M."/>
            <person name="Teasdale R.D."/>
            <person name="Liu E.T."/>
            <person name="Brusic V."/>
            <person name="Quackenbush J."/>
            <person name="Wahlestedt C."/>
            <person name="Mattick J.S."/>
            <person name="Hume D.A."/>
            <person name="Kai C."/>
            <person name="Sasaki D."/>
            <person name="Tomaru Y."/>
            <person name="Fukuda S."/>
            <person name="Kanamori-Katayama M."/>
            <person name="Suzuki M."/>
            <person name="Aoki J."/>
            <person name="Arakawa T."/>
            <person name="Iida J."/>
            <person name="Imamura K."/>
            <person name="Itoh M."/>
            <person name="Kato T."/>
            <person name="Kawaji H."/>
            <person name="Kawagashira N."/>
            <person name="Kawashima T."/>
            <person name="Kojima M."/>
            <person name="Kondo S."/>
            <person name="Konno H."/>
            <person name="Nakano K."/>
            <person name="Ninomiya N."/>
            <person name="Nishio T."/>
            <person name="Okada M."/>
            <person name="Plessy C."/>
            <person name="Shibata K."/>
            <person name="Shiraki T."/>
            <person name="Suzuki S."/>
            <person name="Tagami M."/>
            <person name="Waki K."/>
            <person name="Watahiki A."/>
            <person name="Okamura-Oho Y."/>
            <person name="Suzuki H."/>
            <person name="Kawai J."/>
            <person name="Hayashizaki Y."/>
        </authorList>
    </citation>
    <scope>NUCLEOTIDE SEQUENCE [LARGE SCALE MRNA]</scope>
    <source>
        <strain>C57BL/6J</strain>
        <tissue>Visual cortex</tissue>
    </source>
</reference>
<reference key="3">
    <citation type="submission" date="2005-09" db="EMBL/GenBank/DDBJ databases">
        <authorList>
            <person name="Mural R.J."/>
            <person name="Adams M.D."/>
            <person name="Myers E.W."/>
            <person name="Smith H.O."/>
            <person name="Venter J.C."/>
        </authorList>
    </citation>
    <scope>NUCLEOTIDE SEQUENCE [LARGE SCALE GENOMIC DNA]</scope>
</reference>
<reference key="4">
    <citation type="journal article" date="2004" name="Genome Res.">
        <title>The status, quality, and expansion of the NIH full-length cDNA project: the Mammalian Gene Collection (MGC).</title>
        <authorList>
            <consortium name="The MGC Project Team"/>
        </authorList>
    </citation>
    <scope>NUCLEOTIDE SEQUENCE [LARGE SCALE MRNA]</scope>
    <source>
        <strain>C57BL/6J</strain>
        <tissue>Brain</tissue>
    </source>
</reference>
<reference key="5">
    <citation type="journal article" date="2010" name="Cell">
        <title>A tissue-specific atlas of mouse protein phosphorylation and expression.</title>
        <authorList>
            <person name="Huttlin E.L."/>
            <person name="Jedrychowski M.P."/>
            <person name="Elias J.E."/>
            <person name="Goswami T."/>
            <person name="Rad R."/>
            <person name="Beausoleil S.A."/>
            <person name="Villen J."/>
            <person name="Haas W."/>
            <person name="Sowa M.E."/>
            <person name="Gygi S.P."/>
        </authorList>
    </citation>
    <scope>IDENTIFICATION BY MASS SPECTROMETRY [LARGE SCALE ANALYSIS]</scope>
    <source>
        <tissue>Brain</tissue>
    </source>
</reference>
<name>SLIK3_MOUSE</name>
<protein>
    <recommendedName>
        <fullName>SLIT and NTRK-like protein 3</fullName>
    </recommendedName>
</protein>
<evidence type="ECO:0000255" key="1"/>
<evidence type="ECO:0000256" key="2">
    <source>
        <dbReference type="SAM" id="MobiDB-lite"/>
    </source>
</evidence>
<evidence type="ECO:0000269" key="3">
    <source>
    </source>
</evidence>
<evidence type="ECO:0000305" key="4"/>
<evidence type="ECO:0000312" key="5">
    <source>
        <dbReference type="EMBL" id="BAC67206.1"/>
    </source>
</evidence>
<proteinExistence type="evidence at protein level"/>